<keyword id="KW-0472">Membrane</keyword>
<keyword id="KW-1185">Reference proteome</keyword>
<keyword id="KW-0762">Sugar transport</keyword>
<keyword id="KW-0812">Transmembrane</keyword>
<keyword id="KW-1133">Transmembrane helix</keyword>
<keyword id="KW-0813">Transport</keyword>
<sequence>MSTDESEDVYSDLYSIISQVTSNTANDIEQLPYALTFKTSLIFVGATIGGLLFGYDTGVISGVLLSLKPEDLSLVVLTDVQKELITSSTSVGSFFGSILAFPLADRYGRRITLAICCSIFILAAIGMAIARTLTFLICGRLLVGIAVGVSAQCVPLFLSEISPSRIRGFMLTLNIIAITGGQLVSYVIASLMKEIDNSWRYLFALSAIPAILFLSILDFIPESPRWSISKGDILYTRDSLRMLYPTASTYHVNSKIKQLIIELDKLRLYEDASEPLLVQSQSVIRYMDSSTSGTLSPPNIKRLSSNTERTSNTMSSSSAYLSALRGPAPNGALASNKKKRHRMEPRTIRALIVGCMLMFFQQITGFNAFMYYAAIIFSKFNIKNPLLPPILIASTNFIFTFFAMYTMDSLGRRAILLRTILIMTVGLLLCSVGFGHDQVNLLLISVVIYVAAYASAMGSVPWTCVEFLPLNRRSFGASCIACTNWLTNAFVSMTYLSTINTIGDENTMLIFAFFTVCAWFFVYFWYPEVKGLSLEEVGRVFDNGIDVHYVFRTYH</sequence>
<gene>
    <name type="ordered locus">YDR387C</name>
</gene>
<reference key="1">
    <citation type="journal article" date="1997" name="Nature">
        <title>The nucleotide sequence of Saccharomyces cerevisiae chromosome IV.</title>
        <authorList>
            <person name="Jacq C."/>
            <person name="Alt-Moerbe J."/>
            <person name="Andre B."/>
            <person name="Arnold W."/>
            <person name="Bahr A."/>
            <person name="Ballesta J.P.G."/>
            <person name="Bargues M."/>
            <person name="Baron L."/>
            <person name="Becker A."/>
            <person name="Biteau N."/>
            <person name="Bloecker H."/>
            <person name="Blugeon C."/>
            <person name="Boskovic J."/>
            <person name="Brandt P."/>
            <person name="Brueckner M."/>
            <person name="Buitrago M.J."/>
            <person name="Coster F."/>
            <person name="Delaveau T."/>
            <person name="del Rey F."/>
            <person name="Dujon B."/>
            <person name="Eide L.G."/>
            <person name="Garcia-Cantalejo J.M."/>
            <person name="Goffeau A."/>
            <person name="Gomez-Peris A."/>
            <person name="Granotier C."/>
            <person name="Hanemann V."/>
            <person name="Hankeln T."/>
            <person name="Hoheisel J.D."/>
            <person name="Jaeger W."/>
            <person name="Jimenez A."/>
            <person name="Jonniaux J.-L."/>
            <person name="Kraemer C."/>
            <person name="Kuester H."/>
            <person name="Laamanen P."/>
            <person name="Legros Y."/>
            <person name="Louis E.J."/>
            <person name="Moeller-Rieker S."/>
            <person name="Monnet A."/>
            <person name="Moro M."/>
            <person name="Mueller-Auer S."/>
            <person name="Nussbaumer B."/>
            <person name="Paricio N."/>
            <person name="Paulin L."/>
            <person name="Perea J."/>
            <person name="Perez-Alonso M."/>
            <person name="Perez-Ortin J.E."/>
            <person name="Pohl T.M."/>
            <person name="Prydz H."/>
            <person name="Purnelle B."/>
            <person name="Rasmussen S.W."/>
            <person name="Remacha M.A."/>
            <person name="Revuelta J.L."/>
            <person name="Rieger M."/>
            <person name="Salom D."/>
            <person name="Saluz H.P."/>
            <person name="Saiz J.E."/>
            <person name="Saren A.-M."/>
            <person name="Schaefer M."/>
            <person name="Scharfe M."/>
            <person name="Schmidt E.R."/>
            <person name="Schneider C."/>
            <person name="Scholler P."/>
            <person name="Schwarz S."/>
            <person name="Soler-Mira A."/>
            <person name="Urrestarazu L.A."/>
            <person name="Verhasselt P."/>
            <person name="Vissers S."/>
            <person name="Voet M."/>
            <person name="Volckaert G."/>
            <person name="Wagner G."/>
            <person name="Wambutt R."/>
            <person name="Wedler E."/>
            <person name="Wedler H."/>
            <person name="Woelfl S."/>
            <person name="Harris D.E."/>
            <person name="Bowman S."/>
            <person name="Brown D."/>
            <person name="Churcher C.M."/>
            <person name="Connor R."/>
            <person name="Dedman K."/>
            <person name="Gentles S."/>
            <person name="Hamlin N."/>
            <person name="Hunt S."/>
            <person name="Jones L."/>
            <person name="McDonald S."/>
            <person name="Murphy L.D."/>
            <person name="Niblett D."/>
            <person name="Odell C."/>
            <person name="Oliver K."/>
            <person name="Rajandream M.A."/>
            <person name="Richards C."/>
            <person name="Shore L."/>
            <person name="Walsh S.V."/>
            <person name="Barrell B.G."/>
            <person name="Dietrich F.S."/>
            <person name="Mulligan J.T."/>
            <person name="Allen E."/>
            <person name="Araujo R."/>
            <person name="Aviles E."/>
            <person name="Berno A."/>
            <person name="Carpenter J."/>
            <person name="Chen E."/>
            <person name="Cherry J.M."/>
            <person name="Chung E."/>
            <person name="Duncan M."/>
            <person name="Hunicke-Smith S."/>
            <person name="Hyman R.W."/>
            <person name="Komp C."/>
            <person name="Lashkari D."/>
            <person name="Lew H."/>
            <person name="Lin D."/>
            <person name="Mosedale D."/>
            <person name="Nakahara K."/>
            <person name="Namath A."/>
            <person name="Oefner P."/>
            <person name="Oh C."/>
            <person name="Petel F.X."/>
            <person name="Roberts D."/>
            <person name="Schramm S."/>
            <person name="Schroeder M."/>
            <person name="Shogren T."/>
            <person name="Shroff N."/>
            <person name="Winant A."/>
            <person name="Yelton M.A."/>
            <person name="Botstein D."/>
            <person name="Davis R.W."/>
            <person name="Johnston M."/>
            <person name="Andrews S."/>
            <person name="Brinkman R."/>
            <person name="Cooper J."/>
            <person name="Ding H."/>
            <person name="Du Z."/>
            <person name="Favello A."/>
            <person name="Fulton L."/>
            <person name="Gattung S."/>
            <person name="Greco T."/>
            <person name="Hallsworth K."/>
            <person name="Hawkins J."/>
            <person name="Hillier L.W."/>
            <person name="Jier M."/>
            <person name="Johnson D."/>
            <person name="Johnston L."/>
            <person name="Kirsten J."/>
            <person name="Kucaba T."/>
            <person name="Langston Y."/>
            <person name="Latreille P."/>
            <person name="Le T."/>
            <person name="Mardis E."/>
            <person name="Menezes S."/>
            <person name="Miller N."/>
            <person name="Nhan M."/>
            <person name="Pauley A."/>
            <person name="Peluso D."/>
            <person name="Rifkin L."/>
            <person name="Riles L."/>
            <person name="Taich A."/>
            <person name="Trevaskis E."/>
            <person name="Vignati D."/>
            <person name="Wilcox L."/>
            <person name="Wohldman P."/>
            <person name="Vaudin M."/>
            <person name="Wilson R."/>
            <person name="Waterston R."/>
            <person name="Albermann K."/>
            <person name="Hani J."/>
            <person name="Heumann K."/>
            <person name="Kleine K."/>
            <person name="Mewes H.-W."/>
            <person name="Zollner A."/>
            <person name="Zaccaria P."/>
        </authorList>
    </citation>
    <scope>NUCLEOTIDE SEQUENCE [LARGE SCALE GENOMIC DNA]</scope>
    <source>
        <strain>ATCC 204508 / S288c</strain>
    </source>
</reference>
<reference key="2">
    <citation type="journal article" date="2014" name="G3 (Bethesda)">
        <title>The reference genome sequence of Saccharomyces cerevisiae: Then and now.</title>
        <authorList>
            <person name="Engel S.R."/>
            <person name="Dietrich F.S."/>
            <person name="Fisk D.G."/>
            <person name="Binkley G."/>
            <person name="Balakrishnan R."/>
            <person name="Costanzo M.C."/>
            <person name="Dwight S.S."/>
            <person name="Hitz B.C."/>
            <person name="Karra K."/>
            <person name="Nash R.S."/>
            <person name="Weng S."/>
            <person name="Wong E.D."/>
            <person name="Lloyd P."/>
            <person name="Skrzypek M.S."/>
            <person name="Miyasato S.R."/>
            <person name="Simison M."/>
            <person name="Cherry J.M."/>
        </authorList>
    </citation>
    <scope>GENOME REANNOTATION</scope>
    <source>
        <strain>ATCC 204508 / S288c</strain>
    </source>
</reference>
<reference key="3">
    <citation type="journal article" date="2006" name="Proc. Natl. Acad. Sci. U.S.A.">
        <title>A global topology map of the Saccharomyces cerevisiae membrane proteome.</title>
        <authorList>
            <person name="Kim H."/>
            <person name="Melen K."/>
            <person name="Oesterberg M."/>
            <person name="von Heijne G."/>
        </authorList>
    </citation>
    <scope>TOPOLOGY [LARGE SCALE ANALYSIS]</scope>
    <source>
        <strain>ATCC 208353 / W303-1A</strain>
    </source>
</reference>
<proteinExistence type="evidence at protein level"/>
<protein>
    <recommendedName>
        <fullName>Probable metabolite transport protein YDR387C</fullName>
    </recommendedName>
</protein>
<name>YD387_YEAST</name>
<comment type="subcellular location">
    <subcellularLocation>
        <location>Membrane</location>
        <topology>Multi-pass membrane protein</topology>
    </subcellularLocation>
</comment>
<comment type="similarity">
    <text evidence="3">Belongs to the major facilitator superfamily. Sugar transporter (TC 2.A.1.1) family.</text>
</comment>
<feature type="chain" id="PRO_0000252274" description="Probable metabolite transport protein YDR387C">
    <location>
        <begin position="1"/>
        <end position="555"/>
    </location>
</feature>
<feature type="topological domain" description="Cytoplasmic" evidence="1">
    <location>
        <begin position="1"/>
        <end position="39"/>
    </location>
</feature>
<feature type="transmembrane region" description="Helical" evidence="1">
    <location>
        <begin position="40"/>
        <end position="60"/>
    </location>
</feature>
<feature type="topological domain" description="Extracellular" evidence="1">
    <location>
        <begin position="61"/>
        <end position="83"/>
    </location>
</feature>
<feature type="transmembrane region" description="Helical" evidence="1">
    <location>
        <begin position="84"/>
        <end position="104"/>
    </location>
</feature>
<feature type="topological domain" description="Cytoplasmic" evidence="1">
    <location>
        <begin position="105"/>
        <end position="118"/>
    </location>
</feature>
<feature type="transmembrane region" description="Helical" evidence="1">
    <location>
        <begin position="119"/>
        <end position="139"/>
    </location>
</feature>
<feature type="topological domain" description="Extracellular" evidence="1">
    <location>
        <position position="140"/>
    </location>
</feature>
<feature type="transmembrane region" description="Helical" evidence="1">
    <location>
        <begin position="141"/>
        <end position="161"/>
    </location>
</feature>
<feature type="topological domain" description="Cytoplasmic" evidence="1">
    <location>
        <begin position="162"/>
        <end position="168"/>
    </location>
</feature>
<feature type="transmembrane region" description="Helical" evidence="1">
    <location>
        <begin position="169"/>
        <end position="189"/>
    </location>
</feature>
<feature type="topological domain" description="Extracellular" evidence="1">
    <location>
        <begin position="190"/>
        <end position="200"/>
    </location>
</feature>
<feature type="transmembrane region" description="Helical" evidence="1">
    <location>
        <begin position="201"/>
        <end position="221"/>
    </location>
</feature>
<feature type="topological domain" description="Cytoplasmic" evidence="1">
    <location>
        <begin position="222"/>
        <end position="356"/>
    </location>
</feature>
<feature type="transmembrane region" description="Helical" evidence="1">
    <location>
        <begin position="357"/>
        <end position="377"/>
    </location>
</feature>
<feature type="topological domain" description="Extracellular" evidence="1">
    <location>
        <begin position="378"/>
        <end position="384"/>
    </location>
</feature>
<feature type="transmembrane region" description="Helical" evidence="1">
    <location>
        <begin position="385"/>
        <end position="405"/>
    </location>
</feature>
<feature type="topological domain" description="Cytoplasmic" evidence="1">
    <location>
        <begin position="406"/>
        <end position="413"/>
    </location>
</feature>
<feature type="transmembrane region" description="Helical" evidence="1">
    <location>
        <begin position="414"/>
        <end position="434"/>
    </location>
</feature>
<feature type="topological domain" description="Extracellular" evidence="1">
    <location>
        <begin position="435"/>
        <end position="440"/>
    </location>
</feature>
<feature type="transmembrane region" description="Helical" evidence="1">
    <location>
        <begin position="441"/>
        <end position="461"/>
    </location>
</feature>
<feature type="topological domain" description="Cytoplasmic" evidence="1">
    <location>
        <begin position="462"/>
        <end position="474"/>
    </location>
</feature>
<feature type="transmembrane region" description="Helical" evidence="1">
    <location>
        <begin position="475"/>
        <end position="497"/>
    </location>
</feature>
<feature type="topological domain" description="Extracellular" evidence="1">
    <location>
        <begin position="498"/>
        <end position="506"/>
    </location>
</feature>
<feature type="transmembrane region" description="Helical" evidence="1">
    <location>
        <begin position="507"/>
        <end position="527"/>
    </location>
</feature>
<feature type="topological domain" description="Cytoplasmic" evidence="1">
    <location>
        <begin position="528"/>
        <end position="555"/>
    </location>
</feature>
<feature type="region of interest" description="Disordered" evidence="2">
    <location>
        <begin position="289"/>
        <end position="313"/>
    </location>
</feature>
<evidence type="ECO:0000255" key="1"/>
<evidence type="ECO:0000256" key="2">
    <source>
        <dbReference type="SAM" id="MobiDB-lite"/>
    </source>
</evidence>
<evidence type="ECO:0000305" key="3"/>
<organism>
    <name type="scientific">Saccharomyces cerevisiae (strain ATCC 204508 / S288c)</name>
    <name type="common">Baker's yeast</name>
    <dbReference type="NCBI Taxonomy" id="559292"/>
    <lineage>
        <taxon>Eukaryota</taxon>
        <taxon>Fungi</taxon>
        <taxon>Dikarya</taxon>
        <taxon>Ascomycota</taxon>
        <taxon>Saccharomycotina</taxon>
        <taxon>Saccharomycetes</taxon>
        <taxon>Saccharomycetales</taxon>
        <taxon>Saccharomycetaceae</taxon>
        <taxon>Saccharomyces</taxon>
    </lineage>
</organism>
<dbReference type="EMBL" id="U32274">
    <property type="protein sequence ID" value="AAB64829.1"/>
    <property type="molecule type" value="Genomic_DNA"/>
</dbReference>
<dbReference type="EMBL" id="BK006938">
    <property type="protein sequence ID" value="DAA12231.1"/>
    <property type="molecule type" value="Genomic_DNA"/>
</dbReference>
<dbReference type="PIR" id="S69671">
    <property type="entry name" value="S69671"/>
</dbReference>
<dbReference type="SMR" id="Q04162"/>
<dbReference type="BioGRID" id="32448">
    <property type="interactions" value="57"/>
</dbReference>
<dbReference type="DIP" id="DIP-4084N"/>
<dbReference type="FunCoup" id="Q04162">
    <property type="interactions" value="1424"/>
</dbReference>
<dbReference type="STRING" id="4932.YDR387C"/>
<dbReference type="TCDB" id="2.A.1.1.101">
    <property type="family name" value="the major facilitator superfamily (mfs)"/>
</dbReference>
<dbReference type="iPTMnet" id="Q04162"/>
<dbReference type="PaxDb" id="4932-YDR387C"/>
<dbReference type="PeptideAtlas" id="Q04162"/>
<dbReference type="EnsemblFungi" id="YDR387C_mRNA">
    <property type="protein sequence ID" value="YDR387C"/>
    <property type="gene ID" value="YDR387C"/>
</dbReference>
<dbReference type="KEGG" id="sce:YDR387C"/>
<dbReference type="AGR" id="SGD:S000002795"/>
<dbReference type="SGD" id="S000002795">
    <property type="gene designation" value="YDR387C"/>
</dbReference>
<dbReference type="VEuPathDB" id="FungiDB:YDR387C"/>
<dbReference type="eggNOG" id="KOG0254">
    <property type="taxonomic scope" value="Eukaryota"/>
</dbReference>
<dbReference type="GeneTree" id="ENSGT00940000155870"/>
<dbReference type="HOGENOM" id="CLU_001265_30_5_1"/>
<dbReference type="InParanoid" id="Q04162"/>
<dbReference type="OMA" id="GFNAFMY"/>
<dbReference type="OrthoDB" id="5290825at2759"/>
<dbReference type="BioCyc" id="YEAST:G3O-29935-MONOMER"/>
<dbReference type="BioGRID-ORCS" id="851995">
    <property type="hits" value="0 hits in 10 CRISPR screens"/>
</dbReference>
<dbReference type="PRO" id="PR:Q04162"/>
<dbReference type="Proteomes" id="UP000002311">
    <property type="component" value="Chromosome IV"/>
</dbReference>
<dbReference type="RNAct" id="Q04162">
    <property type="molecule type" value="protein"/>
</dbReference>
<dbReference type="GO" id="GO:0000329">
    <property type="term" value="C:fungal-type vacuole membrane"/>
    <property type="evidence" value="ECO:0007005"/>
    <property type="project" value="SGD"/>
</dbReference>
<dbReference type="GO" id="GO:0016020">
    <property type="term" value="C:membrane"/>
    <property type="evidence" value="ECO:0000250"/>
    <property type="project" value="SGD"/>
</dbReference>
<dbReference type="GO" id="GO:0005366">
    <property type="term" value="F:myo-inositol:proton symporter activity"/>
    <property type="evidence" value="ECO:0000318"/>
    <property type="project" value="GO_Central"/>
</dbReference>
<dbReference type="GO" id="GO:0022857">
    <property type="term" value="F:transmembrane transporter activity"/>
    <property type="evidence" value="ECO:0000250"/>
    <property type="project" value="SGD"/>
</dbReference>
<dbReference type="GO" id="GO:1904679">
    <property type="term" value="P:myo-inositol import across plasma membrane"/>
    <property type="evidence" value="ECO:0000318"/>
    <property type="project" value="GO_Central"/>
</dbReference>
<dbReference type="GO" id="GO:0055085">
    <property type="term" value="P:transmembrane transport"/>
    <property type="evidence" value="ECO:0000250"/>
    <property type="project" value="SGD"/>
</dbReference>
<dbReference type="CDD" id="cd17360">
    <property type="entry name" value="MFS_HMIT_like"/>
    <property type="match status" value="1"/>
</dbReference>
<dbReference type="FunFam" id="1.20.1250.20:FF:000632">
    <property type="entry name" value="YDR387C-like protein"/>
    <property type="match status" value="1"/>
</dbReference>
<dbReference type="Gene3D" id="1.20.1250.20">
    <property type="entry name" value="MFS general substrate transporter like domains"/>
    <property type="match status" value="2"/>
</dbReference>
<dbReference type="InterPro" id="IPR020846">
    <property type="entry name" value="MFS_dom"/>
</dbReference>
<dbReference type="InterPro" id="IPR005828">
    <property type="entry name" value="MFS_sugar_transport-like"/>
</dbReference>
<dbReference type="InterPro" id="IPR036259">
    <property type="entry name" value="MFS_trans_sf"/>
</dbReference>
<dbReference type="InterPro" id="IPR050814">
    <property type="entry name" value="Myo-inositol_Transporter"/>
</dbReference>
<dbReference type="InterPro" id="IPR003663">
    <property type="entry name" value="Sugar/inositol_transpt"/>
</dbReference>
<dbReference type="InterPro" id="IPR005829">
    <property type="entry name" value="Sugar_transporter_CS"/>
</dbReference>
<dbReference type="PANTHER" id="PTHR48020">
    <property type="entry name" value="PROTON MYO-INOSITOL COTRANSPORTER"/>
    <property type="match status" value="1"/>
</dbReference>
<dbReference type="PANTHER" id="PTHR48020:SF12">
    <property type="entry name" value="PROTON MYO-INOSITOL COTRANSPORTER"/>
    <property type="match status" value="1"/>
</dbReference>
<dbReference type="Pfam" id="PF00083">
    <property type="entry name" value="Sugar_tr"/>
    <property type="match status" value="2"/>
</dbReference>
<dbReference type="PRINTS" id="PR00171">
    <property type="entry name" value="SUGRTRNSPORT"/>
</dbReference>
<dbReference type="SUPFAM" id="SSF103473">
    <property type="entry name" value="MFS general substrate transporter"/>
    <property type="match status" value="1"/>
</dbReference>
<dbReference type="PROSITE" id="PS50850">
    <property type="entry name" value="MFS"/>
    <property type="match status" value="1"/>
</dbReference>
<dbReference type="PROSITE" id="PS00216">
    <property type="entry name" value="SUGAR_TRANSPORT_1"/>
    <property type="match status" value="1"/>
</dbReference>
<dbReference type="PROSITE" id="PS00217">
    <property type="entry name" value="SUGAR_TRANSPORT_2"/>
    <property type="match status" value="1"/>
</dbReference>
<accession>Q04162</accession>
<accession>D6VT21</accession>